<evidence type="ECO:0000255" key="1">
    <source>
        <dbReference type="HAMAP-Rule" id="MF_00124"/>
    </source>
</evidence>
<name>KITH_SALPA</name>
<comment type="catalytic activity">
    <reaction evidence="1">
        <text>thymidine + ATP = dTMP + ADP + H(+)</text>
        <dbReference type="Rhea" id="RHEA:19129"/>
        <dbReference type="ChEBI" id="CHEBI:15378"/>
        <dbReference type="ChEBI" id="CHEBI:17748"/>
        <dbReference type="ChEBI" id="CHEBI:30616"/>
        <dbReference type="ChEBI" id="CHEBI:63528"/>
        <dbReference type="ChEBI" id="CHEBI:456216"/>
        <dbReference type="EC" id="2.7.1.21"/>
    </reaction>
</comment>
<comment type="subunit">
    <text evidence="1">Homotetramer.</text>
</comment>
<comment type="subcellular location">
    <subcellularLocation>
        <location evidence="1">Cytoplasm</location>
    </subcellularLocation>
</comment>
<comment type="similarity">
    <text evidence="1">Belongs to the thymidine kinase family.</text>
</comment>
<dbReference type="EC" id="2.7.1.21" evidence="1"/>
<dbReference type="EMBL" id="CP000026">
    <property type="protein sequence ID" value="AAV77089.1"/>
    <property type="molecule type" value="Genomic_DNA"/>
</dbReference>
<dbReference type="RefSeq" id="WP_000068097.1">
    <property type="nucleotide sequence ID" value="NC_006511.1"/>
</dbReference>
<dbReference type="SMR" id="Q5PCT4"/>
<dbReference type="KEGG" id="spt:SPA1128"/>
<dbReference type="HOGENOM" id="CLU_064400_2_1_6"/>
<dbReference type="Proteomes" id="UP000008185">
    <property type="component" value="Chromosome"/>
</dbReference>
<dbReference type="GO" id="GO:0005829">
    <property type="term" value="C:cytosol"/>
    <property type="evidence" value="ECO:0007669"/>
    <property type="project" value="TreeGrafter"/>
</dbReference>
<dbReference type="GO" id="GO:0005524">
    <property type="term" value="F:ATP binding"/>
    <property type="evidence" value="ECO:0007669"/>
    <property type="project" value="UniProtKB-UniRule"/>
</dbReference>
<dbReference type="GO" id="GO:0004797">
    <property type="term" value="F:thymidine kinase activity"/>
    <property type="evidence" value="ECO:0007669"/>
    <property type="project" value="UniProtKB-UniRule"/>
</dbReference>
<dbReference type="GO" id="GO:0008270">
    <property type="term" value="F:zinc ion binding"/>
    <property type="evidence" value="ECO:0007669"/>
    <property type="project" value="UniProtKB-UniRule"/>
</dbReference>
<dbReference type="GO" id="GO:0071897">
    <property type="term" value="P:DNA biosynthetic process"/>
    <property type="evidence" value="ECO:0007669"/>
    <property type="project" value="UniProtKB-KW"/>
</dbReference>
<dbReference type="GO" id="GO:0046104">
    <property type="term" value="P:thymidine metabolic process"/>
    <property type="evidence" value="ECO:0007669"/>
    <property type="project" value="TreeGrafter"/>
</dbReference>
<dbReference type="FunFam" id="3.30.60.20:FF:000017">
    <property type="entry name" value="Thymidine kinase"/>
    <property type="match status" value="1"/>
</dbReference>
<dbReference type="FunFam" id="3.40.50.300:FF:000323">
    <property type="entry name" value="Thymidine kinase"/>
    <property type="match status" value="1"/>
</dbReference>
<dbReference type="Gene3D" id="3.30.60.20">
    <property type="match status" value="1"/>
</dbReference>
<dbReference type="Gene3D" id="3.40.50.300">
    <property type="entry name" value="P-loop containing nucleotide triphosphate hydrolases"/>
    <property type="match status" value="1"/>
</dbReference>
<dbReference type="HAMAP" id="MF_00124">
    <property type="entry name" value="Thymidine_kinase"/>
    <property type="match status" value="1"/>
</dbReference>
<dbReference type="InterPro" id="IPR027417">
    <property type="entry name" value="P-loop_NTPase"/>
</dbReference>
<dbReference type="InterPro" id="IPR001267">
    <property type="entry name" value="Thymidine_kinase"/>
</dbReference>
<dbReference type="InterPro" id="IPR020633">
    <property type="entry name" value="Thymidine_kinase_CS"/>
</dbReference>
<dbReference type="NCBIfam" id="NF003298">
    <property type="entry name" value="PRK04296.1-3"/>
    <property type="match status" value="1"/>
</dbReference>
<dbReference type="NCBIfam" id="NF003300">
    <property type="entry name" value="PRK04296.1-5"/>
    <property type="match status" value="1"/>
</dbReference>
<dbReference type="PANTHER" id="PTHR11441">
    <property type="entry name" value="THYMIDINE KINASE"/>
    <property type="match status" value="1"/>
</dbReference>
<dbReference type="PANTHER" id="PTHR11441:SF0">
    <property type="entry name" value="THYMIDINE KINASE, CYTOSOLIC"/>
    <property type="match status" value="1"/>
</dbReference>
<dbReference type="Pfam" id="PF00265">
    <property type="entry name" value="TK"/>
    <property type="match status" value="1"/>
</dbReference>
<dbReference type="PIRSF" id="PIRSF035805">
    <property type="entry name" value="TK_cell"/>
    <property type="match status" value="1"/>
</dbReference>
<dbReference type="SUPFAM" id="SSF57716">
    <property type="entry name" value="Glucocorticoid receptor-like (DNA-binding domain)"/>
    <property type="match status" value="1"/>
</dbReference>
<dbReference type="SUPFAM" id="SSF52540">
    <property type="entry name" value="P-loop containing nucleoside triphosphate hydrolases"/>
    <property type="match status" value="1"/>
</dbReference>
<dbReference type="PROSITE" id="PS00603">
    <property type="entry name" value="TK_CELLULAR_TYPE"/>
    <property type="match status" value="1"/>
</dbReference>
<accession>Q5PCT4</accession>
<protein>
    <recommendedName>
        <fullName evidence="1">Thymidine kinase</fullName>
        <ecNumber evidence="1">2.7.1.21</ecNumber>
    </recommendedName>
</protein>
<organism>
    <name type="scientific">Salmonella paratyphi A (strain ATCC 9150 / SARB42)</name>
    <dbReference type="NCBI Taxonomy" id="295319"/>
    <lineage>
        <taxon>Bacteria</taxon>
        <taxon>Pseudomonadati</taxon>
        <taxon>Pseudomonadota</taxon>
        <taxon>Gammaproteobacteria</taxon>
        <taxon>Enterobacterales</taxon>
        <taxon>Enterobacteriaceae</taxon>
        <taxon>Salmonella</taxon>
    </lineage>
</organism>
<proteinExistence type="inferred from homology"/>
<feature type="chain" id="PRO_0000175012" description="Thymidine kinase">
    <location>
        <begin position="1"/>
        <end position="205"/>
    </location>
</feature>
<feature type="active site" description="Proton acceptor" evidence="1">
    <location>
        <position position="88"/>
    </location>
</feature>
<feature type="binding site" evidence="1">
    <location>
        <begin position="9"/>
        <end position="16"/>
    </location>
    <ligand>
        <name>ATP</name>
        <dbReference type="ChEBI" id="CHEBI:30616"/>
    </ligand>
</feature>
<feature type="binding site" evidence="1">
    <location>
        <begin position="87"/>
        <end position="90"/>
    </location>
    <ligand>
        <name>ATP</name>
        <dbReference type="ChEBI" id="CHEBI:30616"/>
    </ligand>
</feature>
<feature type="binding site" evidence="1">
    <location>
        <position position="145"/>
    </location>
    <ligand>
        <name>Zn(2+)</name>
        <dbReference type="ChEBI" id="CHEBI:29105"/>
    </ligand>
</feature>
<feature type="binding site" evidence="1">
    <location>
        <position position="147"/>
    </location>
    <ligand>
        <name>Zn(2+)</name>
        <dbReference type="ChEBI" id="CHEBI:29105"/>
    </ligand>
</feature>
<feature type="binding site" evidence="1">
    <location>
        <position position="182"/>
    </location>
    <ligand>
        <name>Zn(2+)</name>
        <dbReference type="ChEBI" id="CHEBI:29105"/>
    </ligand>
</feature>
<feature type="binding site" evidence="1">
    <location>
        <position position="185"/>
    </location>
    <ligand>
        <name>Zn(2+)</name>
        <dbReference type="ChEBI" id="CHEBI:29105"/>
    </ligand>
</feature>
<keyword id="KW-0067">ATP-binding</keyword>
<keyword id="KW-0963">Cytoplasm</keyword>
<keyword id="KW-0237">DNA synthesis</keyword>
<keyword id="KW-0418">Kinase</keyword>
<keyword id="KW-0479">Metal-binding</keyword>
<keyword id="KW-0547">Nucleotide-binding</keyword>
<keyword id="KW-0808">Transferase</keyword>
<keyword id="KW-0862">Zinc</keyword>
<gene>
    <name evidence="1" type="primary">tdk</name>
    <name type="ordered locus">SPA1128</name>
</gene>
<reference key="1">
    <citation type="journal article" date="2004" name="Nat. Genet.">
        <title>Comparison of genome degradation in Paratyphi A and Typhi, human-restricted serovars of Salmonella enterica that cause typhoid.</title>
        <authorList>
            <person name="McClelland M."/>
            <person name="Sanderson K.E."/>
            <person name="Clifton S.W."/>
            <person name="Latreille P."/>
            <person name="Porwollik S."/>
            <person name="Sabo A."/>
            <person name="Meyer R."/>
            <person name="Bieri T."/>
            <person name="Ozersky P."/>
            <person name="McLellan M."/>
            <person name="Harkins C.R."/>
            <person name="Wang C."/>
            <person name="Nguyen C."/>
            <person name="Berghoff A."/>
            <person name="Elliott G."/>
            <person name="Kohlberg S."/>
            <person name="Strong C."/>
            <person name="Du F."/>
            <person name="Carter J."/>
            <person name="Kremizki C."/>
            <person name="Layman D."/>
            <person name="Leonard S."/>
            <person name="Sun H."/>
            <person name="Fulton L."/>
            <person name="Nash W."/>
            <person name="Miner T."/>
            <person name="Minx P."/>
            <person name="Delehaunty K."/>
            <person name="Fronick C."/>
            <person name="Magrini V."/>
            <person name="Nhan M."/>
            <person name="Warren W."/>
            <person name="Florea L."/>
            <person name="Spieth J."/>
            <person name="Wilson R.K."/>
        </authorList>
    </citation>
    <scope>NUCLEOTIDE SEQUENCE [LARGE SCALE GENOMIC DNA]</scope>
    <source>
        <strain>ATCC 9150 / SARB42</strain>
    </source>
</reference>
<sequence length="205" mass="23405">MAQLYFYYSAMNAGKSTALLQSSYNYQERGMRTVVYTAEIDDRFGAGKVSSRIGLSSPAKLFNQNTSLFEEIRAESARQTIHCVLVDESQFLTRQQVYQLSEVVDKLDIPVLCYGLRTDFRGELFVGSQYLLAWSDKLVELKTICFCGRKASMVLRLDQDGRPYNEGEQVVIGGNERYVSVCRKHYKDALEEGSLTAIQERHRHI</sequence>